<reference key="1">
    <citation type="submission" date="2006-12" db="EMBL/GenBank/DDBJ databases">
        <title>Complete sequence of Shewanella amazonensis SB2B.</title>
        <authorList>
            <consortium name="US DOE Joint Genome Institute"/>
            <person name="Copeland A."/>
            <person name="Lucas S."/>
            <person name="Lapidus A."/>
            <person name="Barry K."/>
            <person name="Detter J.C."/>
            <person name="Glavina del Rio T."/>
            <person name="Hammon N."/>
            <person name="Israni S."/>
            <person name="Dalin E."/>
            <person name="Tice H."/>
            <person name="Pitluck S."/>
            <person name="Munk A.C."/>
            <person name="Brettin T."/>
            <person name="Bruce D."/>
            <person name="Han C."/>
            <person name="Tapia R."/>
            <person name="Gilna P."/>
            <person name="Schmutz J."/>
            <person name="Larimer F."/>
            <person name="Land M."/>
            <person name="Hauser L."/>
            <person name="Kyrpides N."/>
            <person name="Mikhailova N."/>
            <person name="Fredrickson J."/>
            <person name="Richardson P."/>
        </authorList>
    </citation>
    <scope>NUCLEOTIDE SEQUENCE [LARGE SCALE GENOMIC DNA]</scope>
    <source>
        <strain>ATCC BAA-1098 / SB2B</strain>
    </source>
</reference>
<accession>A1S1P8</accession>
<dbReference type="EMBL" id="CP000507">
    <property type="protein sequence ID" value="ABL98304.1"/>
    <property type="molecule type" value="Genomic_DNA"/>
</dbReference>
<dbReference type="SMR" id="A1S1P8"/>
<dbReference type="STRING" id="326297.Sama_0092"/>
<dbReference type="KEGG" id="saz:Sama_0092"/>
<dbReference type="eggNOG" id="COG0218">
    <property type="taxonomic scope" value="Bacteria"/>
</dbReference>
<dbReference type="HOGENOM" id="CLU_033732_1_2_6"/>
<dbReference type="OrthoDB" id="9804921at2"/>
<dbReference type="Proteomes" id="UP000009175">
    <property type="component" value="Chromosome"/>
</dbReference>
<dbReference type="GO" id="GO:0005829">
    <property type="term" value="C:cytosol"/>
    <property type="evidence" value="ECO:0007669"/>
    <property type="project" value="TreeGrafter"/>
</dbReference>
<dbReference type="GO" id="GO:0005525">
    <property type="term" value="F:GTP binding"/>
    <property type="evidence" value="ECO:0007669"/>
    <property type="project" value="UniProtKB-UniRule"/>
</dbReference>
<dbReference type="GO" id="GO:0046872">
    <property type="term" value="F:metal ion binding"/>
    <property type="evidence" value="ECO:0007669"/>
    <property type="project" value="UniProtKB-KW"/>
</dbReference>
<dbReference type="GO" id="GO:0000917">
    <property type="term" value="P:division septum assembly"/>
    <property type="evidence" value="ECO:0007669"/>
    <property type="project" value="UniProtKB-KW"/>
</dbReference>
<dbReference type="CDD" id="cd01876">
    <property type="entry name" value="YihA_EngB"/>
    <property type="match status" value="1"/>
</dbReference>
<dbReference type="FunFam" id="3.40.50.300:FF:000098">
    <property type="entry name" value="Probable GTP-binding protein EngB"/>
    <property type="match status" value="1"/>
</dbReference>
<dbReference type="Gene3D" id="3.40.50.300">
    <property type="entry name" value="P-loop containing nucleotide triphosphate hydrolases"/>
    <property type="match status" value="1"/>
</dbReference>
<dbReference type="HAMAP" id="MF_00321">
    <property type="entry name" value="GTPase_EngB"/>
    <property type="match status" value="1"/>
</dbReference>
<dbReference type="InterPro" id="IPR030393">
    <property type="entry name" value="G_ENGB_dom"/>
</dbReference>
<dbReference type="InterPro" id="IPR006073">
    <property type="entry name" value="GTP-bd"/>
</dbReference>
<dbReference type="InterPro" id="IPR019987">
    <property type="entry name" value="GTP-bd_ribosome_bio_YsxC"/>
</dbReference>
<dbReference type="InterPro" id="IPR027417">
    <property type="entry name" value="P-loop_NTPase"/>
</dbReference>
<dbReference type="NCBIfam" id="TIGR03598">
    <property type="entry name" value="GTPase_YsxC"/>
    <property type="match status" value="1"/>
</dbReference>
<dbReference type="PANTHER" id="PTHR11649:SF13">
    <property type="entry name" value="ENGB-TYPE G DOMAIN-CONTAINING PROTEIN"/>
    <property type="match status" value="1"/>
</dbReference>
<dbReference type="PANTHER" id="PTHR11649">
    <property type="entry name" value="MSS1/TRME-RELATED GTP-BINDING PROTEIN"/>
    <property type="match status" value="1"/>
</dbReference>
<dbReference type="Pfam" id="PF01926">
    <property type="entry name" value="MMR_HSR1"/>
    <property type="match status" value="1"/>
</dbReference>
<dbReference type="SUPFAM" id="SSF52540">
    <property type="entry name" value="P-loop containing nucleoside triphosphate hydrolases"/>
    <property type="match status" value="1"/>
</dbReference>
<dbReference type="PROSITE" id="PS51706">
    <property type="entry name" value="G_ENGB"/>
    <property type="match status" value="1"/>
</dbReference>
<comment type="function">
    <text evidence="1">Necessary for normal cell division and for the maintenance of normal septation.</text>
</comment>
<comment type="cofactor">
    <cofactor evidence="1">
        <name>Mg(2+)</name>
        <dbReference type="ChEBI" id="CHEBI:18420"/>
    </cofactor>
</comment>
<comment type="similarity">
    <text evidence="1">Belongs to the TRAFAC class TrmE-Era-EngA-EngB-Septin-like GTPase superfamily. EngB GTPase family.</text>
</comment>
<name>ENGB_SHEAM</name>
<protein>
    <recommendedName>
        <fullName evidence="1">Probable GTP-binding protein EngB</fullName>
    </recommendedName>
</protein>
<organism>
    <name type="scientific">Shewanella amazonensis (strain ATCC BAA-1098 / SB2B)</name>
    <dbReference type="NCBI Taxonomy" id="326297"/>
    <lineage>
        <taxon>Bacteria</taxon>
        <taxon>Pseudomonadati</taxon>
        <taxon>Pseudomonadota</taxon>
        <taxon>Gammaproteobacteria</taxon>
        <taxon>Alteromonadales</taxon>
        <taxon>Shewanellaceae</taxon>
        <taxon>Shewanella</taxon>
    </lineage>
</organism>
<keyword id="KW-0131">Cell cycle</keyword>
<keyword id="KW-0132">Cell division</keyword>
<keyword id="KW-0342">GTP-binding</keyword>
<keyword id="KW-0460">Magnesium</keyword>
<keyword id="KW-0479">Metal-binding</keyword>
<keyword id="KW-0547">Nucleotide-binding</keyword>
<keyword id="KW-1185">Reference proteome</keyword>
<keyword id="KW-0717">Septation</keyword>
<sequence>MNQTRIDFRQAKFLISAPDIAHLDKHLPGDVGVEIAFAGRSNAGKSSALNALTEQKSLARTSKTPGRTQLINVFELDAQRRLVDLPGYGFAKVPLEMKHKWQNALGEYLQKRACLSGVVVLMDIRHPLKDLDRQMIEWSVASEIPVLALLTKADKLGQSEKMKTVNAVRKELAEFGDWVSVEPFSALKGTGKPKVLAILDAWCHPDWLVEELEQAED</sequence>
<evidence type="ECO:0000255" key="1">
    <source>
        <dbReference type="HAMAP-Rule" id="MF_00321"/>
    </source>
</evidence>
<proteinExistence type="inferred from homology"/>
<feature type="chain" id="PRO_1000005852" description="Probable GTP-binding protein EngB">
    <location>
        <begin position="1"/>
        <end position="217"/>
    </location>
</feature>
<feature type="domain" description="EngB-type G" evidence="1">
    <location>
        <begin position="31"/>
        <end position="205"/>
    </location>
</feature>
<feature type="binding site" evidence="1">
    <location>
        <begin position="39"/>
        <end position="46"/>
    </location>
    <ligand>
        <name>GTP</name>
        <dbReference type="ChEBI" id="CHEBI:37565"/>
    </ligand>
</feature>
<feature type="binding site" evidence="1">
    <location>
        <position position="46"/>
    </location>
    <ligand>
        <name>Mg(2+)</name>
        <dbReference type="ChEBI" id="CHEBI:18420"/>
    </ligand>
</feature>
<feature type="binding site" evidence="1">
    <location>
        <begin position="66"/>
        <end position="70"/>
    </location>
    <ligand>
        <name>GTP</name>
        <dbReference type="ChEBI" id="CHEBI:37565"/>
    </ligand>
</feature>
<feature type="binding site" evidence="1">
    <location>
        <position position="68"/>
    </location>
    <ligand>
        <name>Mg(2+)</name>
        <dbReference type="ChEBI" id="CHEBI:18420"/>
    </ligand>
</feature>
<feature type="binding site" evidence="1">
    <location>
        <begin position="84"/>
        <end position="87"/>
    </location>
    <ligand>
        <name>GTP</name>
        <dbReference type="ChEBI" id="CHEBI:37565"/>
    </ligand>
</feature>
<feature type="binding site" evidence="1">
    <location>
        <begin position="151"/>
        <end position="154"/>
    </location>
    <ligand>
        <name>GTP</name>
        <dbReference type="ChEBI" id="CHEBI:37565"/>
    </ligand>
</feature>
<feature type="binding site" evidence="1">
    <location>
        <begin position="184"/>
        <end position="186"/>
    </location>
    <ligand>
        <name>GTP</name>
        <dbReference type="ChEBI" id="CHEBI:37565"/>
    </ligand>
</feature>
<gene>
    <name evidence="1" type="primary">engB</name>
    <name type="ordered locus">Sama_0092</name>
</gene>